<protein>
    <recommendedName>
        <fullName evidence="1">NADPH-dependent 7-cyano-7-deazaguanine reductase</fullName>
        <ecNumber evidence="1">1.7.1.13</ecNumber>
    </recommendedName>
    <alternativeName>
        <fullName evidence="1">7-cyano-7-carbaguanine reductase</fullName>
    </alternativeName>
    <alternativeName>
        <fullName evidence="1">NADPH-dependent nitrile oxidoreductase</fullName>
    </alternativeName>
    <alternativeName>
        <fullName evidence="1">PreQ(0) reductase</fullName>
    </alternativeName>
</protein>
<keyword id="KW-0963">Cytoplasm</keyword>
<keyword id="KW-0521">NADP</keyword>
<keyword id="KW-0560">Oxidoreductase</keyword>
<keyword id="KW-0671">Queuosine biosynthesis</keyword>
<proteinExistence type="inferred from homology"/>
<gene>
    <name evidence="1" type="primary">queF</name>
    <name type="ordered locus">NGK_2073</name>
</gene>
<sequence>MSRNNEELQGISLLGNQKTQYPTGYAPEILEAFDNKHPDNDYFVKFVCPEFTSLCPMTGQPDFATIVIRYIPHIKMVESKSLKLYLFSFRNHGDFHEDCVNIIMKDLIALMDPKYIEVFGEFTPRGGIAVHPFANYGKAGTEFEALARKRLFEHDAQ</sequence>
<reference key="1">
    <citation type="journal article" date="2008" name="J. Bacteriol.">
        <title>Complete genome sequence of Neisseria gonorrhoeae NCCP11945.</title>
        <authorList>
            <person name="Chung G.T."/>
            <person name="Yoo J.S."/>
            <person name="Oh H.B."/>
            <person name="Lee Y.S."/>
            <person name="Cha S.H."/>
            <person name="Kim S.J."/>
            <person name="Yoo C.K."/>
        </authorList>
    </citation>
    <scope>NUCLEOTIDE SEQUENCE [LARGE SCALE GENOMIC DNA]</scope>
    <source>
        <strain>NCCP11945</strain>
    </source>
</reference>
<dbReference type="EC" id="1.7.1.13" evidence="1"/>
<dbReference type="EMBL" id="CP001050">
    <property type="protein sequence ID" value="ACF30682.1"/>
    <property type="molecule type" value="Genomic_DNA"/>
</dbReference>
<dbReference type="RefSeq" id="WP_003689837.1">
    <property type="nucleotide sequence ID" value="NC_011035.1"/>
</dbReference>
<dbReference type="SMR" id="B4RNP9"/>
<dbReference type="GeneID" id="66753965"/>
<dbReference type="KEGG" id="ngk:NGK_2073"/>
<dbReference type="HOGENOM" id="CLU_102489_0_1_4"/>
<dbReference type="UniPathway" id="UPA00392"/>
<dbReference type="Proteomes" id="UP000002564">
    <property type="component" value="Chromosome"/>
</dbReference>
<dbReference type="GO" id="GO:0005737">
    <property type="term" value="C:cytoplasm"/>
    <property type="evidence" value="ECO:0007669"/>
    <property type="project" value="UniProtKB-SubCell"/>
</dbReference>
<dbReference type="GO" id="GO:0033739">
    <property type="term" value="F:preQ1 synthase activity"/>
    <property type="evidence" value="ECO:0007669"/>
    <property type="project" value="UniProtKB-UniRule"/>
</dbReference>
<dbReference type="GO" id="GO:0008616">
    <property type="term" value="P:queuosine biosynthetic process"/>
    <property type="evidence" value="ECO:0007669"/>
    <property type="project" value="UniProtKB-UniRule"/>
</dbReference>
<dbReference type="GO" id="GO:0006400">
    <property type="term" value="P:tRNA modification"/>
    <property type="evidence" value="ECO:0007669"/>
    <property type="project" value="UniProtKB-UniRule"/>
</dbReference>
<dbReference type="Gene3D" id="3.30.1130.10">
    <property type="match status" value="1"/>
</dbReference>
<dbReference type="HAMAP" id="MF_00818">
    <property type="entry name" value="QueF_type1"/>
    <property type="match status" value="1"/>
</dbReference>
<dbReference type="InterPro" id="IPR043133">
    <property type="entry name" value="GTP-CH-I_C/QueF"/>
</dbReference>
<dbReference type="InterPro" id="IPR050084">
    <property type="entry name" value="NADPH_dep_7-cyano-7-deazaG_red"/>
</dbReference>
<dbReference type="InterPro" id="IPR029500">
    <property type="entry name" value="QueF"/>
</dbReference>
<dbReference type="InterPro" id="IPR016856">
    <property type="entry name" value="QueF_type1"/>
</dbReference>
<dbReference type="NCBIfam" id="TIGR03139">
    <property type="entry name" value="QueF-II"/>
    <property type="match status" value="1"/>
</dbReference>
<dbReference type="PANTHER" id="PTHR34354">
    <property type="entry name" value="NADPH-DEPENDENT 7-CYANO-7-DEAZAGUANINE REDUCTASE"/>
    <property type="match status" value="1"/>
</dbReference>
<dbReference type="PANTHER" id="PTHR34354:SF1">
    <property type="entry name" value="NADPH-DEPENDENT 7-CYANO-7-DEAZAGUANINE REDUCTASE"/>
    <property type="match status" value="1"/>
</dbReference>
<dbReference type="Pfam" id="PF14489">
    <property type="entry name" value="QueF"/>
    <property type="match status" value="1"/>
</dbReference>
<dbReference type="PIRSF" id="PIRSF027377">
    <property type="entry name" value="Nitrile_oxidored_QueF"/>
    <property type="match status" value="1"/>
</dbReference>
<dbReference type="SUPFAM" id="SSF55620">
    <property type="entry name" value="Tetrahydrobiopterin biosynthesis enzymes-like"/>
    <property type="match status" value="1"/>
</dbReference>
<feature type="chain" id="PRO_1000134306" description="NADPH-dependent 7-cyano-7-deazaguanine reductase">
    <location>
        <begin position="1"/>
        <end position="157"/>
    </location>
</feature>
<feature type="active site" description="Thioimide intermediate" evidence="1">
    <location>
        <position position="55"/>
    </location>
</feature>
<feature type="active site" description="Proton donor" evidence="1">
    <location>
        <position position="62"/>
    </location>
</feature>
<feature type="binding site" evidence="1">
    <location>
        <begin position="77"/>
        <end position="79"/>
    </location>
    <ligand>
        <name>substrate</name>
    </ligand>
</feature>
<feature type="binding site" evidence="1">
    <location>
        <begin position="96"/>
        <end position="97"/>
    </location>
    <ligand>
        <name>substrate</name>
    </ligand>
</feature>
<evidence type="ECO:0000255" key="1">
    <source>
        <dbReference type="HAMAP-Rule" id="MF_00818"/>
    </source>
</evidence>
<comment type="function">
    <text evidence="1">Catalyzes the NADPH-dependent reduction of 7-cyano-7-deazaguanine (preQ0) to 7-aminomethyl-7-deazaguanine (preQ1).</text>
</comment>
<comment type="catalytic activity">
    <reaction evidence="1">
        <text>7-aminomethyl-7-carbaguanine + 2 NADP(+) = 7-cyano-7-deazaguanine + 2 NADPH + 3 H(+)</text>
        <dbReference type="Rhea" id="RHEA:13409"/>
        <dbReference type="ChEBI" id="CHEBI:15378"/>
        <dbReference type="ChEBI" id="CHEBI:45075"/>
        <dbReference type="ChEBI" id="CHEBI:57783"/>
        <dbReference type="ChEBI" id="CHEBI:58349"/>
        <dbReference type="ChEBI" id="CHEBI:58703"/>
        <dbReference type="EC" id="1.7.1.13"/>
    </reaction>
</comment>
<comment type="pathway">
    <text evidence="1">tRNA modification; tRNA-queuosine biosynthesis.</text>
</comment>
<comment type="subcellular location">
    <subcellularLocation>
        <location evidence="1">Cytoplasm</location>
    </subcellularLocation>
</comment>
<comment type="similarity">
    <text evidence="1">Belongs to the GTP cyclohydrolase I family. QueF type 1 subfamily.</text>
</comment>
<organism>
    <name type="scientific">Neisseria gonorrhoeae (strain NCCP11945)</name>
    <dbReference type="NCBI Taxonomy" id="521006"/>
    <lineage>
        <taxon>Bacteria</taxon>
        <taxon>Pseudomonadati</taxon>
        <taxon>Pseudomonadota</taxon>
        <taxon>Betaproteobacteria</taxon>
        <taxon>Neisseriales</taxon>
        <taxon>Neisseriaceae</taxon>
        <taxon>Neisseria</taxon>
    </lineage>
</organism>
<name>QUEF_NEIG2</name>
<accession>B4RNP9</accession>